<dbReference type="EMBL" id="D84670">
    <property type="protein sequence ID" value="BAA25162.1"/>
    <property type="molecule type" value="Genomic_DNA"/>
</dbReference>
<dbReference type="EMBL" id="AE009950">
    <property type="protein sequence ID" value="AAL80141.1"/>
    <property type="molecule type" value="Genomic_DNA"/>
</dbReference>
<dbReference type="PIR" id="T43932">
    <property type="entry name" value="T43932"/>
</dbReference>
<dbReference type="RefSeq" id="WP_011011129.1">
    <property type="nucleotide sequence ID" value="NZ_CP023154.1"/>
</dbReference>
<dbReference type="SMR" id="P81413"/>
<dbReference type="STRING" id="186497.PF0017"/>
<dbReference type="PaxDb" id="186497-PF0017"/>
<dbReference type="KEGG" id="pfu:PF0017"/>
<dbReference type="PATRIC" id="fig|186497.12.peg.19"/>
<dbReference type="eggNOG" id="arCOG00467">
    <property type="taxonomic scope" value="Archaea"/>
</dbReference>
<dbReference type="HOGENOM" id="CLU_025112_3_1_2"/>
<dbReference type="OrthoDB" id="195574at2157"/>
<dbReference type="PhylomeDB" id="P81413"/>
<dbReference type="Proteomes" id="UP000001013">
    <property type="component" value="Chromosome"/>
</dbReference>
<dbReference type="GO" id="GO:0005524">
    <property type="term" value="F:ATP binding"/>
    <property type="evidence" value="ECO:0007669"/>
    <property type="project" value="UniProtKB-UniRule"/>
</dbReference>
<dbReference type="GO" id="GO:0016887">
    <property type="term" value="F:ATP hydrolysis activity"/>
    <property type="evidence" value="ECO:0007669"/>
    <property type="project" value="InterPro"/>
</dbReference>
<dbReference type="GO" id="GO:0003677">
    <property type="term" value="F:DNA binding"/>
    <property type="evidence" value="ECO:0007669"/>
    <property type="project" value="UniProtKB-KW"/>
</dbReference>
<dbReference type="GO" id="GO:0006260">
    <property type="term" value="P:DNA replication"/>
    <property type="evidence" value="ECO:0007669"/>
    <property type="project" value="UniProtKB-UniRule"/>
</dbReference>
<dbReference type="CDD" id="cd00009">
    <property type="entry name" value="AAA"/>
    <property type="match status" value="1"/>
</dbReference>
<dbReference type="CDD" id="cd08768">
    <property type="entry name" value="Cdc6_C"/>
    <property type="match status" value="1"/>
</dbReference>
<dbReference type="CDD" id="cd18139">
    <property type="entry name" value="HLD_clamp_RarA"/>
    <property type="match status" value="1"/>
</dbReference>
<dbReference type="FunFam" id="1.10.8.60:FF:000073">
    <property type="entry name" value="ORC1-type DNA replication protein"/>
    <property type="match status" value="1"/>
</dbReference>
<dbReference type="FunFam" id="3.40.50.300:FF:000930">
    <property type="entry name" value="ORC1-type DNA replication protein"/>
    <property type="match status" value="1"/>
</dbReference>
<dbReference type="Gene3D" id="1.10.8.60">
    <property type="match status" value="1"/>
</dbReference>
<dbReference type="Gene3D" id="3.40.50.300">
    <property type="entry name" value="P-loop containing nucleotide triphosphate hydrolases"/>
    <property type="match status" value="1"/>
</dbReference>
<dbReference type="Gene3D" id="1.10.10.10">
    <property type="entry name" value="Winged helix-like DNA-binding domain superfamily/Winged helix DNA-binding domain"/>
    <property type="match status" value="1"/>
</dbReference>
<dbReference type="HAMAP" id="MF_01407">
    <property type="entry name" value="ORC1_type_DNA_replic_protein"/>
    <property type="match status" value="1"/>
</dbReference>
<dbReference type="InterPro" id="IPR003593">
    <property type="entry name" value="AAA+_ATPase"/>
</dbReference>
<dbReference type="InterPro" id="IPR003959">
    <property type="entry name" value="ATPase_AAA_core"/>
</dbReference>
<dbReference type="InterPro" id="IPR015163">
    <property type="entry name" value="Cdc6_C"/>
</dbReference>
<dbReference type="InterPro" id="IPR055237">
    <property type="entry name" value="Cdc6_lid"/>
</dbReference>
<dbReference type="InterPro" id="IPR050311">
    <property type="entry name" value="ORC1/CDC6"/>
</dbReference>
<dbReference type="InterPro" id="IPR014277">
    <property type="entry name" value="Orc1/Cdc6_arc"/>
</dbReference>
<dbReference type="InterPro" id="IPR027417">
    <property type="entry name" value="P-loop_NTPase"/>
</dbReference>
<dbReference type="InterPro" id="IPR036388">
    <property type="entry name" value="WH-like_DNA-bd_sf"/>
</dbReference>
<dbReference type="InterPro" id="IPR036390">
    <property type="entry name" value="WH_DNA-bd_sf"/>
</dbReference>
<dbReference type="NCBIfam" id="TIGR02928">
    <property type="entry name" value="orc1/cdc6 family replication initiation protein"/>
    <property type="match status" value="1"/>
</dbReference>
<dbReference type="NCBIfam" id="NF001625">
    <property type="entry name" value="PRK00411.1-3"/>
    <property type="match status" value="1"/>
</dbReference>
<dbReference type="PANTHER" id="PTHR10763">
    <property type="entry name" value="CELL DIVISION CONTROL PROTEIN 6-RELATED"/>
    <property type="match status" value="1"/>
</dbReference>
<dbReference type="PANTHER" id="PTHR10763:SF22">
    <property type="entry name" value="ORC1-TYPE DNA REPLICATION PROTEIN"/>
    <property type="match status" value="1"/>
</dbReference>
<dbReference type="Pfam" id="PF00004">
    <property type="entry name" value="AAA"/>
    <property type="match status" value="1"/>
</dbReference>
<dbReference type="Pfam" id="PF09079">
    <property type="entry name" value="Cdc6_C"/>
    <property type="match status" value="1"/>
</dbReference>
<dbReference type="Pfam" id="PF22703">
    <property type="entry name" value="Cdc6_lid"/>
    <property type="match status" value="1"/>
</dbReference>
<dbReference type="SMART" id="SM00382">
    <property type="entry name" value="AAA"/>
    <property type="match status" value="1"/>
</dbReference>
<dbReference type="SMART" id="SM01074">
    <property type="entry name" value="Cdc6_C"/>
    <property type="match status" value="1"/>
</dbReference>
<dbReference type="SUPFAM" id="SSF52540">
    <property type="entry name" value="P-loop containing nucleoside triphosphate hydrolases"/>
    <property type="match status" value="1"/>
</dbReference>
<dbReference type="SUPFAM" id="SSF46785">
    <property type="entry name" value="Winged helix' DNA-binding domain"/>
    <property type="match status" value="1"/>
</dbReference>
<protein>
    <recommendedName>
        <fullName evidence="1">ORC1-type DNA replication protein</fullName>
    </recommendedName>
</protein>
<evidence type="ECO:0000255" key="1">
    <source>
        <dbReference type="HAMAP-Rule" id="MF_01407"/>
    </source>
</evidence>
<evidence type="ECO:0000269" key="2">
    <source>
    </source>
</evidence>
<evidence type="ECO:0000269" key="3">
    <source>
    </source>
</evidence>
<evidence type="ECO:0000269" key="4">
    <source>
    </source>
</evidence>
<evidence type="ECO:0000305" key="5"/>
<name>CDC6_PYRFU</name>
<gene>
    <name type="primary">cdc6</name>
    <name type="synonym">orc1</name>
    <name type="ordered locus">PF0017</name>
</gene>
<organism>
    <name type="scientific">Pyrococcus furiosus (strain ATCC 43587 / DSM 3638 / JCM 8422 / Vc1)</name>
    <dbReference type="NCBI Taxonomy" id="186497"/>
    <lineage>
        <taxon>Archaea</taxon>
        <taxon>Methanobacteriati</taxon>
        <taxon>Methanobacteriota</taxon>
        <taxon>Thermococci</taxon>
        <taxon>Thermococcales</taxon>
        <taxon>Thermococcaceae</taxon>
        <taxon>Pyrococcus</taxon>
    </lineage>
</organism>
<accession>P81413</accession>
<proteinExistence type="evidence at protein level"/>
<comment type="function">
    <text evidence="1 2 3 4">Involved in regulation of DNA replication. May play essential roles in origin recognition and cell cycle control of replication. Binds specifically to the oriC region, which alters the topological structure of the DNA and introduces localized melting of the DNA duplex. May recruit the MCM helicase onto the oriC region. Shows weak ATPase activity in the absence of DNA.</text>
</comment>
<comment type="subunit">
    <text evidence="4 5">Homodimer (Probable). Interacts with MCM.</text>
</comment>
<comment type="similarity">
    <text evidence="1">Belongs to the CDC6/cdc18 family.</text>
</comment>
<feature type="chain" id="PRO_0000151012" description="ORC1-type DNA replication protein">
    <location>
        <begin position="1"/>
        <end position="420"/>
    </location>
</feature>
<feature type="binding site" evidence="1">
    <location>
        <begin position="73"/>
        <end position="77"/>
    </location>
    <ligand>
        <name>ATP</name>
        <dbReference type="ChEBI" id="CHEBI:30616"/>
    </ligand>
</feature>
<feature type="binding site" evidence="1">
    <location>
        <position position="221"/>
    </location>
    <ligand>
        <name>ATP</name>
        <dbReference type="ChEBI" id="CHEBI:30616"/>
    </ligand>
</feature>
<feature type="binding site" evidence="1">
    <location>
        <position position="233"/>
    </location>
    <ligand>
        <name>ATP</name>
        <dbReference type="ChEBI" id="CHEBI:30616"/>
    </ligand>
</feature>
<sequence>MNEGEHQIKLDELFEKLLRARKIFKNKDVLRHSYTPKDLPHRHEQIETLAQILVPVLRGETPSNIFVYGKTGTGKTVTVKFVTEELKRISEKYNIPVDVIYINCEIVDTHYRVLANIVNYFKDETGIEVPMVGWPTDEVYAKLKQVIDMKERFVIIVLDEIDKLVKKSGDEVLYSLTRINTELKRAKVSVIGISNDLKFKEYLDPRVLSSLSEEEVVFPPYDANQLRDILTQRAEEAFYPGVLDEGVIPLCAALAAREHGDARKALDLLRVAGEIAEREGASKVTEKHVWKAQEKIEQDMMEEVIKTLPLQSKVLLYAIVLLDENGDLPANTGDVYAVYRELCEYIDLEPLTQRRISDLINELDMLGIINAKVVSKGRYGRTKEIRLNVTSYKIRNVLRYDYSIQPLLTISLKSEQRRLI</sequence>
<reference key="1">
    <citation type="journal article" date="1997" name="Genes Cells">
        <title>A novel DNA polymerase in the hyperthermophilic archaeon, Pyrococcus furiosus: gene cloning, expression, and characterization.</title>
        <authorList>
            <person name="Uemori T."/>
            <person name="Sato Y."/>
            <person name="Kato I."/>
            <person name="Doi H."/>
            <person name="Ishino Y."/>
        </authorList>
    </citation>
    <scope>NUCLEOTIDE SEQUENCE [GENOMIC DNA]</scope>
    <source>
        <strain>ATCC 43587 / DSM 3638 / JCM 8422 / Vc1</strain>
    </source>
</reference>
<reference key="2">
    <citation type="journal article" date="1999" name="Genetics">
        <title>Divergence of the hyperthermophilic archaea Pyrococcus furiosus and P. horikoshii inferred from complete genomic sequences.</title>
        <authorList>
            <person name="Maeder D.L."/>
            <person name="Weiss R.B."/>
            <person name="Dunn D.M."/>
            <person name="Cherry J.L."/>
            <person name="Gonzalez J.M."/>
            <person name="DiRuggiero J."/>
            <person name="Robb F.T."/>
        </authorList>
    </citation>
    <scope>NUCLEOTIDE SEQUENCE [LARGE SCALE GENOMIC DNA]</scope>
    <source>
        <strain>ATCC 43587 / DSM 3638 / JCM 8422 / Vc1</strain>
    </source>
</reference>
<reference key="3">
    <citation type="journal article" date="2007" name="Nucleic Acids Res.">
        <title>Genomewide and biochemical analyses of DNA-binding activity of Cdc6/Orc1 and Mcm proteins in Pyrococcus sp.</title>
        <authorList>
            <person name="Matsunaga F."/>
            <person name="Glatigny A."/>
            <person name="Mucchielli-Giorgi M.H."/>
            <person name="Agier N."/>
            <person name="Delacroix H."/>
            <person name="Marisa L."/>
            <person name="Durosay P."/>
            <person name="Ishino Y."/>
            <person name="Aggerbeck L."/>
            <person name="Forterre P."/>
        </authorList>
    </citation>
    <scope>FUNCTION</scope>
    <scope>DNA-BINDING</scope>
</reference>
<reference key="4">
    <citation type="journal article" date="2010" name="Extremophiles">
        <title>Localized melting of duplex DNA by Cdc6/Orc1 at the DNA replication origin in the hyperthermophilic archaeon Pyrococcus furiosus.</title>
        <authorList>
            <person name="Matsunaga F."/>
            <person name="Takemura K."/>
            <person name="Akita M."/>
            <person name="Adachi A."/>
            <person name="Yamagami T."/>
            <person name="Ishino Y."/>
        </authorList>
    </citation>
    <scope>FUNCTION</scope>
    <scope>DNA-BINDING</scope>
</reference>
<reference key="5">
    <citation type="journal article" date="2010" name="Genes Cells">
        <title>Cdc6/Orc1 from Pyrococcus furiosus may act as the origin recognition protein and Mcm helicase recruiter.</title>
        <authorList>
            <person name="Akita M."/>
            <person name="Adachi A."/>
            <person name="Takemura K."/>
            <person name="Yamagami T."/>
            <person name="Matsunaga F."/>
            <person name="Ishino Y."/>
        </authorList>
    </citation>
    <scope>FUNCTION</scope>
    <scope>DNA-BINDING</scope>
    <scope>SUBUNIT</scope>
    <scope>INTERACTION WITH MCM</scope>
</reference>
<keyword id="KW-0067">ATP-binding</keyword>
<keyword id="KW-0235">DNA replication</keyword>
<keyword id="KW-0238">DNA-binding</keyword>
<keyword id="KW-0547">Nucleotide-binding</keyword>
<keyword id="KW-1185">Reference proteome</keyword>